<reference key="1">
    <citation type="journal article" date="2006" name="Phytochemistry">
        <title>Identification and functional expression of a type 2 acyl-CoA:diacylglycerol acyltransferase (DGAT2) in developing castor bean seeds which has high homology to the major triglyceride biosynthetic enzyme of fungi and animals.</title>
        <authorList>
            <person name="Kroon J.T."/>
            <person name="Wei W."/>
            <person name="Simon W.J."/>
            <person name="Slabas A.R."/>
        </authorList>
    </citation>
    <scope>NUCLEOTIDE SEQUENCE [MRNA]</scope>
    <scope>FUNCTION</scope>
    <scope>CATALYTIC ACTIVITY</scope>
    <scope>DEVELOPMENTAL STAGE</scope>
</reference>
<reference key="2">
    <citation type="submission" date="2008-01" db="EMBL/GenBank/DDBJ databases">
        <title>Metabolic engineering of hydroxy fatty acid production in plants: RcDGAT2 drives dramatic increases in ricinoleate levels in seed oil.</title>
        <authorList>
            <person name="Burgal J."/>
            <person name="Shockey J."/>
            <person name="Lu C."/>
            <person name="Dyer J."/>
            <person name="Larson T."/>
            <person name="Graham I."/>
            <person name="Browse J."/>
        </authorList>
    </citation>
    <scope>NUCLEOTIDE SEQUENCE [MRNA]</scope>
</reference>
<reference key="3">
    <citation type="submission" date="2016-12" db="EMBL/GenBank/DDBJ databases">
        <title>Isolation and sequence analysis of a novel cDNA encoding a putative diacylglycerol acyltransferase (DGAT2) from Ricinus communis (castor bean).</title>
        <authorList>
            <person name="Lin J.-H."/>
            <person name="McKeon T."/>
        </authorList>
    </citation>
    <scope>NUCLEOTIDE SEQUENCE [MRNA]</scope>
</reference>
<reference key="4">
    <citation type="journal article" date="2010" name="Nat. Biotechnol.">
        <title>Draft genome sequence of the oilseed species Ricinus communis.</title>
        <authorList>
            <person name="Chan A.P."/>
            <person name="Crabtree J."/>
            <person name="Zhao Q."/>
            <person name="Lorenzi H."/>
            <person name="Orvis J."/>
            <person name="Puiu D."/>
            <person name="Melake-Berhan A."/>
            <person name="Jones K.M."/>
            <person name="Redman J."/>
            <person name="Chen G."/>
            <person name="Cahoon E.B."/>
            <person name="Gedil M."/>
            <person name="Stanke M."/>
            <person name="Haas B.J."/>
            <person name="Wortman J.R."/>
            <person name="Fraser-Liggett C.M."/>
            <person name="Ravel J."/>
            <person name="Rabinowicz P.D."/>
        </authorList>
    </citation>
    <scope>NUCLEOTIDE SEQUENCE [LARGE SCALE GENOMIC DNA]</scope>
    <source>
        <strain>cv. Hale</strain>
    </source>
</reference>
<keyword id="KW-0012">Acyltransferase</keyword>
<keyword id="KW-0256">Endoplasmic reticulum</keyword>
<keyword id="KW-0444">Lipid biosynthesis</keyword>
<keyword id="KW-0551">Lipid droplet</keyword>
<keyword id="KW-0443">Lipid metabolism</keyword>
<keyword id="KW-0472">Membrane</keyword>
<keyword id="KW-1185">Reference proteome</keyword>
<keyword id="KW-0808">Transferase</keyword>
<keyword id="KW-0812">Transmembrane</keyword>
<keyword id="KW-1133">Transmembrane helix</keyword>
<comment type="function">
    <text evidence="4">Involved in triacylglycerol (TAG) synthesis (PubMed:17084870). Catalyzes the acylation of the sn-3 hydroxy group of sn-1,2-diricinolein using ricinoleoyl-CoA (PubMed:17084870).</text>
</comment>
<comment type="catalytic activity">
    <reaction evidence="4">
        <text>an acyl-CoA + a 1,2-diacyl-sn-glycerol = a triacyl-sn-glycerol + CoA</text>
        <dbReference type="Rhea" id="RHEA:10868"/>
        <dbReference type="ChEBI" id="CHEBI:17815"/>
        <dbReference type="ChEBI" id="CHEBI:57287"/>
        <dbReference type="ChEBI" id="CHEBI:58342"/>
        <dbReference type="ChEBI" id="CHEBI:64615"/>
        <dbReference type="EC" id="2.3.1.20"/>
    </reaction>
    <physiologicalReaction direction="left-to-right" evidence="4">
        <dbReference type="Rhea" id="RHEA:10869"/>
    </physiologicalReaction>
</comment>
<comment type="catalytic activity">
    <reaction evidence="4">
        <text>1,2-di-(12R-hydroxy-9Z-octadecenoyl)-sn-glycerol + (12R)-hydroxy-(9Z)-octadecenoyl-CoA = 1,2,3-tri-(12R-hydroxy-9Z-octadecenoyl)-glycerol + CoA</text>
        <dbReference type="Rhea" id="RHEA:56536"/>
        <dbReference type="ChEBI" id="CHEBI:57287"/>
        <dbReference type="ChEBI" id="CHEBI:139559"/>
        <dbReference type="ChEBI" id="CHEBI:140471"/>
        <dbReference type="ChEBI" id="CHEBI:140525"/>
    </reaction>
    <physiologicalReaction direction="left-to-right" evidence="4">
        <dbReference type="Rhea" id="RHEA:56537"/>
    </physiologicalReaction>
</comment>
<comment type="pathway">
    <text evidence="6">Glycerolipid metabolism; triacylglycerol biosynthesis.</text>
</comment>
<comment type="subcellular location">
    <subcellularLocation>
        <location evidence="1">Endoplasmic reticulum membrane</location>
        <topology evidence="2">Multi-pass membrane protein</topology>
    </subcellularLocation>
    <subcellularLocation>
        <location evidence="1">Lipid droplet</location>
    </subcellularLocation>
</comment>
<comment type="developmental stage">
    <text evidence="4">Expressed in endosperm of developing seeds from 10 to 30 days after pollination, with a peak at 25 days.</text>
</comment>
<comment type="similarity">
    <text evidence="6">Belongs to the diacylglycerol acyltransferase family.</text>
</comment>
<dbReference type="EC" id="2.3.1.20" evidence="4"/>
<dbReference type="EMBL" id="DQ923084">
    <property type="protein sequence ID" value="ABI83668.1"/>
    <property type="molecule type" value="mRNA"/>
</dbReference>
<dbReference type="EMBL" id="EU391592">
    <property type="protein sequence ID" value="ACB30544.1"/>
    <property type="molecule type" value="mRNA"/>
</dbReference>
<dbReference type="EMBL" id="AY916129">
    <property type="protein sequence ID" value="AAY16324.1"/>
    <property type="molecule type" value="mRNA"/>
</dbReference>
<dbReference type="EMBL" id="EQ974096">
    <property type="protein sequence ID" value="EEF33843.1"/>
    <property type="molecule type" value="Genomic_DNA"/>
</dbReference>
<dbReference type="RefSeq" id="NP_001310616.1">
    <property type="nucleotide sequence ID" value="NM_001323687.1"/>
</dbReference>
<dbReference type="FunCoup" id="A1A442">
    <property type="interactions" value="950"/>
</dbReference>
<dbReference type="STRING" id="3988.A1A442"/>
<dbReference type="SwissLipids" id="SLP:000001918"/>
<dbReference type="GeneID" id="8258757"/>
<dbReference type="KEGG" id="rcu:8258757"/>
<dbReference type="eggNOG" id="KOG0831">
    <property type="taxonomic scope" value="Eukaryota"/>
</dbReference>
<dbReference type="InParanoid" id="A1A442"/>
<dbReference type="OMA" id="FWFTCAN"/>
<dbReference type="OrthoDB" id="264532at2759"/>
<dbReference type="BRENDA" id="2.3.1.20">
    <property type="organism ID" value="1204"/>
</dbReference>
<dbReference type="UniPathway" id="UPA00282"/>
<dbReference type="Proteomes" id="UP000008311">
    <property type="component" value="Unassembled WGS sequence"/>
</dbReference>
<dbReference type="GO" id="GO:0005789">
    <property type="term" value="C:endoplasmic reticulum membrane"/>
    <property type="evidence" value="ECO:0000318"/>
    <property type="project" value="GO_Central"/>
</dbReference>
<dbReference type="GO" id="GO:0005811">
    <property type="term" value="C:lipid droplet"/>
    <property type="evidence" value="ECO:0007669"/>
    <property type="project" value="UniProtKB-SubCell"/>
</dbReference>
<dbReference type="GO" id="GO:0004144">
    <property type="term" value="F:diacylglycerol O-acyltransferase activity"/>
    <property type="evidence" value="ECO:0000314"/>
    <property type="project" value="UniProtKB"/>
</dbReference>
<dbReference type="GO" id="GO:0019432">
    <property type="term" value="P:triglyceride biosynthetic process"/>
    <property type="evidence" value="ECO:0000314"/>
    <property type="project" value="UniProtKB"/>
</dbReference>
<dbReference type="CDD" id="cd07987">
    <property type="entry name" value="LPLAT_MGAT-like"/>
    <property type="match status" value="1"/>
</dbReference>
<dbReference type="InterPro" id="IPR007130">
    <property type="entry name" value="DAGAT"/>
</dbReference>
<dbReference type="PANTHER" id="PTHR12317">
    <property type="entry name" value="DIACYLGLYCEROL O-ACYLTRANSFERASE"/>
    <property type="match status" value="1"/>
</dbReference>
<dbReference type="PANTHER" id="PTHR12317:SF63">
    <property type="entry name" value="DIACYLGLYCEROL O-ACYLTRANSFERASE 2"/>
    <property type="match status" value="1"/>
</dbReference>
<dbReference type="Pfam" id="PF03982">
    <property type="entry name" value="DAGAT"/>
    <property type="match status" value="1"/>
</dbReference>
<dbReference type="SUPFAM" id="SSF69593">
    <property type="entry name" value="Glycerol-3-phosphate (1)-acyltransferase"/>
    <property type="match status" value="1"/>
</dbReference>
<feature type="chain" id="PRO_0000449829" description="Diacylglycerol O-acyltransferase 2">
    <location>
        <begin position="1"/>
        <end position="340"/>
    </location>
</feature>
<feature type="transmembrane region" description="Helical" evidence="2">
    <location>
        <begin position="18"/>
        <end position="38"/>
    </location>
</feature>
<feature type="transmembrane region" description="Helical" evidence="2">
    <location>
        <begin position="41"/>
        <end position="61"/>
    </location>
</feature>
<feature type="region of interest" description="Disordered" evidence="3">
    <location>
        <begin position="1"/>
        <end position="23"/>
    </location>
</feature>
<feature type="compositionally biased region" description="Low complexity" evidence="3">
    <location>
        <begin position="7"/>
        <end position="16"/>
    </location>
</feature>
<feature type="sequence conflict" description="In Ref. 1; ABI83668." evidence="6" ref="1">
    <original>G</original>
    <variation>V</variation>
    <location>
        <position position="234"/>
    </location>
</feature>
<organism>
    <name type="scientific">Ricinus communis</name>
    <name type="common">Castor bean</name>
    <dbReference type="NCBI Taxonomy" id="3988"/>
    <lineage>
        <taxon>Eukaryota</taxon>
        <taxon>Viridiplantae</taxon>
        <taxon>Streptophyta</taxon>
        <taxon>Embryophyta</taxon>
        <taxon>Tracheophyta</taxon>
        <taxon>Spermatophyta</taxon>
        <taxon>Magnoliopsida</taxon>
        <taxon>eudicotyledons</taxon>
        <taxon>Gunneridae</taxon>
        <taxon>Pentapetalae</taxon>
        <taxon>rosids</taxon>
        <taxon>fabids</taxon>
        <taxon>Malpighiales</taxon>
        <taxon>Euphorbiaceae</taxon>
        <taxon>Acalyphoideae</taxon>
        <taxon>Acalypheae</taxon>
        <taxon>Ricinus</taxon>
    </lineage>
</organism>
<evidence type="ECO:0000250" key="1">
    <source>
        <dbReference type="UniProtKB" id="Q9ASU1"/>
    </source>
</evidence>
<evidence type="ECO:0000255" key="2"/>
<evidence type="ECO:0000256" key="3">
    <source>
        <dbReference type="SAM" id="MobiDB-lite"/>
    </source>
</evidence>
<evidence type="ECO:0000269" key="4">
    <source>
    </source>
</evidence>
<evidence type="ECO:0000303" key="5">
    <source>
    </source>
</evidence>
<evidence type="ECO:0000305" key="6"/>
<evidence type="ECO:0000312" key="7">
    <source>
        <dbReference type="EMBL" id="EEF33843.1"/>
    </source>
</evidence>
<proteinExistence type="evidence at protein level"/>
<accession>A1A442</accession>
<accession>A7YJ37</accession>
<protein>
    <recommendedName>
        <fullName evidence="6">Diacylglycerol O-acyltransferase 2</fullName>
        <shortName evidence="5">RcDGAT2</shortName>
        <ecNumber evidence="4">2.3.1.20</ecNumber>
    </recommendedName>
</protein>
<sequence>MGEEANHNNNNNNINSNDEKNEEKSNYTVVNSRELYPTNIFHALLALSIWIGSIHFNLFLLFISYLFLSFPTFLLIVGFFVVLMFIPIDEHSKLGRRLCRYVCRHACSHFPVTLHVEDMNAFHSDRAYVFGYEPHSVFPLGVSVLSDHFAVLPLPKMKVLASNAVFRTPVLRHIWTWCGLTSATKKNFTALLASGYSCIVIPGGVQETFYMKHGSEIAFLKARRGFVRVAMEMGKPLVPVFCFGQSNVYKWWKPDGELFMKIARAIKFSPIVFWGVLGSHLPLQRPMHVVVGKPIEVKQNPQPTVEEVSEVQGQFVAALKDLFERHKARVGYADLTLEIL</sequence>
<gene>
    <name evidence="5" type="primary">DGAT2</name>
    <name evidence="7" type="ORF">RCOM_0613570</name>
</gene>
<name>DGAT2_RICCO</name>